<evidence type="ECO:0000255" key="1">
    <source>
        <dbReference type="HAMAP-Rule" id="MF_00736"/>
    </source>
</evidence>
<evidence type="ECO:0000305" key="2"/>
<reference key="1">
    <citation type="submission" date="2006-09" db="EMBL/GenBank/DDBJ databases">
        <authorList>
            <consortium name="The Klebsiella pneumonia Genome Sequencing Project"/>
            <person name="McClelland M."/>
            <person name="Sanderson E.K."/>
            <person name="Spieth J."/>
            <person name="Clifton W.S."/>
            <person name="Latreille P."/>
            <person name="Sabo A."/>
            <person name="Pepin K."/>
            <person name="Bhonagiri V."/>
            <person name="Porwollik S."/>
            <person name="Ali J."/>
            <person name="Wilson R.K."/>
        </authorList>
    </citation>
    <scope>NUCLEOTIDE SEQUENCE [LARGE SCALE GENOMIC DNA]</scope>
    <source>
        <strain>ATCC 700721 / MGH 78578</strain>
    </source>
</reference>
<feature type="chain" id="PRO_1000046195" description="Large ribosomal subunit protein uL11">
    <location>
        <begin position="1"/>
        <end position="142"/>
    </location>
</feature>
<keyword id="KW-0488">Methylation</keyword>
<keyword id="KW-0687">Ribonucleoprotein</keyword>
<keyword id="KW-0689">Ribosomal protein</keyword>
<keyword id="KW-0694">RNA-binding</keyword>
<keyword id="KW-0699">rRNA-binding</keyword>
<gene>
    <name evidence="1" type="primary">rplK</name>
    <name type="ordered locus">KPN78578_42950</name>
    <name type="ORF">KPN_04360</name>
</gene>
<sequence>MAKKVQAYVKLQVAAGMANPSPPVGPALGQQGVNIMEFCKAFNAKTDSLEKGLPIPVVITVYADRSFTFVTKTPPAAVLLKKAAGIKSGSGKPNKDKVGKISRAQLQEIAQTKAADMTGADIEAMTRSIEGTARSMGLVVED</sequence>
<accession>A6TGN5</accession>
<organism>
    <name type="scientific">Klebsiella pneumoniae subsp. pneumoniae (strain ATCC 700721 / MGH 78578)</name>
    <dbReference type="NCBI Taxonomy" id="272620"/>
    <lineage>
        <taxon>Bacteria</taxon>
        <taxon>Pseudomonadati</taxon>
        <taxon>Pseudomonadota</taxon>
        <taxon>Gammaproteobacteria</taxon>
        <taxon>Enterobacterales</taxon>
        <taxon>Enterobacteriaceae</taxon>
        <taxon>Klebsiella/Raoultella group</taxon>
        <taxon>Klebsiella</taxon>
        <taxon>Klebsiella pneumoniae complex</taxon>
    </lineage>
</organism>
<dbReference type="EMBL" id="CP000647">
    <property type="protein sequence ID" value="ABR79719.1"/>
    <property type="molecule type" value="Genomic_DNA"/>
</dbReference>
<dbReference type="RefSeq" id="WP_002884034.1">
    <property type="nucleotide sequence ID" value="NC_009648.1"/>
</dbReference>
<dbReference type="SMR" id="A6TGN5"/>
<dbReference type="STRING" id="272620.KPN_04360"/>
<dbReference type="jPOST" id="A6TGN5"/>
<dbReference type="PaxDb" id="272620-KPN_04360"/>
<dbReference type="EnsemblBacteria" id="ABR79719">
    <property type="protein sequence ID" value="ABR79719"/>
    <property type="gene ID" value="KPN_04360"/>
</dbReference>
<dbReference type="GeneID" id="93251708"/>
<dbReference type="KEGG" id="kpn:KPN_04360"/>
<dbReference type="HOGENOM" id="CLU_074237_2_0_6"/>
<dbReference type="Proteomes" id="UP000000265">
    <property type="component" value="Chromosome"/>
</dbReference>
<dbReference type="GO" id="GO:0022625">
    <property type="term" value="C:cytosolic large ribosomal subunit"/>
    <property type="evidence" value="ECO:0007669"/>
    <property type="project" value="TreeGrafter"/>
</dbReference>
<dbReference type="GO" id="GO:0070180">
    <property type="term" value="F:large ribosomal subunit rRNA binding"/>
    <property type="evidence" value="ECO:0007669"/>
    <property type="project" value="UniProtKB-UniRule"/>
</dbReference>
<dbReference type="GO" id="GO:0003735">
    <property type="term" value="F:structural constituent of ribosome"/>
    <property type="evidence" value="ECO:0007669"/>
    <property type="project" value="InterPro"/>
</dbReference>
<dbReference type="GO" id="GO:0006412">
    <property type="term" value="P:translation"/>
    <property type="evidence" value="ECO:0007669"/>
    <property type="project" value="UniProtKB-UniRule"/>
</dbReference>
<dbReference type="CDD" id="cd00349">
    <property type="entry name" value="Ribosomal_L11"/>
    <property type="match status" value="1"/>
</dbReference>
<dbReference type="FunFam" id="1.10.10.250:FF:000001">
    <property type="entry name" value="50S ribosomal protein L11"/>
    <property type="match status" value="1"/>
</dbReference>
<dbReference type="FunFam" id="3.30.1550.10:FF:000001">
    <property type="entry name" value="50S ribosomal protein L11"/>
    <property type="match status" value="1"/>
</dbReference>
<dbReference type="Gene3D" id="1.10.10.250">
    <property type="entry name" value="Ribosomal protein L11, C-terminal domain"/>
    <property type="match status" value="1"/>
</dbReference>
<dbReference type="Gene3D" id="3.30.1550.10">
    <property type="entry name" value="Ribosomal protein L11/L12, N-terminal domain"/>
    <property type="match status" value="1"/>
</dbReference>
<dbReference type="HAMAP" id="MF_00736">
    <property type="entry name" value="Ribosomal_uL11"/>
    <property type="match status" value="1"/>
</dbReference>
<dbReference type="InterPro" id="IPR000911">
    <property type="entry name" value="Ribosomal_uL11"/>
</dbReference>
<dbReference type="InterPro" id="IPR006519">
    <property type="entry name" value="Ribosomal_uL11_bac-typ"/>
</dbReference>
<dbReference type="InterPro" id="IPR020783">
    <property type="entry name" value="Ribosomal_uL11_C"/>
</dbReference>
<dbReference type="InterPro" id="IPR036769">
    <property type="entry name" value="Ribosomal_uL11_C_sf"/>
</dbReference>
<dbReference type="InterPro" id="IPR020785">
    <property type="entry name" value="Ribosomal_uL11_CS"/>
</dbReference>
<dbReference type="InterPro" id="IPR020784">
    <property type="entry name" value="Ribosomal_uL11_N"/>
</dbReference>
<dbReference type="InterPro" id="IPR036796">
    <property type="entry name" value="Ribosomal_uL11_N_sf"/>
</dbReference>
<dbReference type="NCBIfam" id="TIGR01632">
    <property type="entry name" value="L11_bact"/>
    <property type="match status" value="1"/>
</dbReference>
<dbReference type="PANTHER" id="PTHR11661">
    <property type="entry name" value="60S RIBOSOMAL PROTEIN L12"/>
    <property type="match status" value="1"/>
</dbReference>
<dbReference type="PANTHER" id="PTHR11661:SF1">
    <property type="entry name" value="LARGE RIBOSOMAL SUBUNIT PROTEIN UL11M"/>
    <property type="match status" value="1"/>
</dbReference>
<dbReference type="Pfam" id="PF00298">
    <property type="entry name" value="Ribosomal_L11"/>
    <property type="match status" value="1"/>
</dbReference>
<dbReference type="Pfam" id="PF03946">
    <property type="entry name" value="Ribosomal_L11_N"/>
    <property type="match status" value="1"/>
</dbReference>
<dbReference type="SMART" id="SM00649">
    <property type="entry name" value="RL11"/>
    <property type="match status" value="1"/>
</dbReference>
<dbReference type="SUPFAM" id="SSF54747">
    <property type="entry name" value="Ribosomal L11/L12e N-terminal domain"/>
    <property type="match status" value="1"/>
</dbReference>
<dbReference type="SUPFAM" id="SSF46906">
    <property type="entry name" value="Ribosomal protein L11, C-terminal domain"/>
    <property type="match status" value="1"/>
</dbReference>
<dbReference type="PROSITE" id="PS00359">
    <property type="entry name" value="RIBOSOMAL_L11"/>
    <property type="match status" value="1"/>
</dbReference>
<comment type="function">
    <text evidence="1">Forms part of the ribosomal stalk which helps the ribosome interact with GTP-bound translation factors.</text>
</comment>
<comment type="subunit">
    <text evidence="1">Part of the ribosomal stalk of the 50S ribosomal subunit. Interacts with L10 and the large rRNA to form the base of the stalk. L10 forms an elongated spine to which L12 dimers bind in a sequential fashion forming a multimeric L10(L12)X complex.</text>
</comment>
<comment type="PTM">
    <text evidence="1">One or more lysine residues are methylated.</text>
</comment>
<comment type="similarity">
    <text evidence="1">Belongs to the universal ribosomal protein uL11 family.</text>
</comment>
<proteinExistence type="inferred from homology"/>
<name>RL11_KLEP7</name>
<protein>
    <recommendedName>
        <fullName evidence="1">Large ribosomal subunit protein uL11</fullName>
    </recommendedName>
    <alternativeName>
        <fullName evidence="2">50S ribosomal protein L11</fullName>
    </alternativeName>
</protein>